<comment type="function">
    <text evidence="1">Cysteine desulfurases mobilize the sulfur from L-cysteine to yield L-alanine, an essential step in sulfur metabolism for biosynthesis of a variety of sulfur-containing biomolecules. Component of the suf operon, which is activated and required under specific conditions such as oxidative stress and iron limitation. Acts as a potent selenocysteine lyase in vitro, that mobilizes selenium from L-selenocysteine. Selenocysteine lyase activity is however unsure in vivo.</text>
</comment>
<comment type="catalytic activity">
    <reaction evidence="1">
        <text>(sulfur carrier)-H + L-cysteine = (sulfur carrier)-SH + L-alanine</text>
        <dbReference type="Rhea" id="RHEA:43892"/>
        <dbReference type="Rhea" id="RHEA-COMP:14737"/>
        <dbReference type="Rhea" id="RHEA-COMP:14739"/>
        <dbReference type="ChEBI" id="CHEBI:29917"/>
        <dbReference type="ChEBI" id="CHEBI:35235"/>
        <dbReference type="ChEBI" id="CHEBI:57972"/>
        <dbReference type="ChEBI" id="CHEBI:64428"/>
        <dbReference type="EC" id="2.8.1.7"/>
    </reaction>
</comment>
<comment type="catalytic activity">
    <reaction evidence="1">
        <text>L-selenocysteine + AH2 = hydrogenselenide + L-alanine + A + H(+)</text>
        <dbReference type="Rhea" id="RHEA:11632"/>
        <dbReference type="ChEBI" id="CHEBI:13193"/>
        <dbReference type="ChEBI" id="CHEBI:15378"/>
        <dbReference type="ChEBI" id="CHEBI:17499"/>
        <dbReference type="ChEBI" id="CHEBI:29317"/>
        <dbReference type="ChEBI" id="CHEBI:57843"/>
        <dbReference type="ChEBI" id="CHEBI:57972"/>
        <dbReference type="EC" id="4.4.1.16"/>
    </reaction>
</comment>
<comment type="cofactor">
    <cofactor evidence="1">
        <name>pyridoxal 5'-phosphate</name>
        <dbReference type="ChEBI" id="CHEBI:597326"/>
    </cofactor>
</comment>
<comment type="pathway">
    <text evidence="1">Cofactor biosynthesis; iron-sulfur cluster biosynthesis.</text>
</comment>
<comment type="subunit">
    <text evidence="1">Homodimer. Interacts with SufE and the SufBCD complex composed of SufB, SufC and SufD. The interaction with SufE is required to mediate the direct transfer of the sulfur atom from the S-sulfanylcysteine.</text>
</comment>
<comment type="subcellular location">
    <subcellularLocation>
        <location evidence="1">Cytoplasm</location>
    </subcellularLocation>
</comment>
<comment type="similarity">
    <text evidence="1">Belongs to the class-V pyridoxal-phosphate-dependent aminotransferase family. Csd subfamily.</text>
</comment>
<gene>
    <name evidence="1" type="primary">sufS</name>
    <name type="ordered locus">ESA_02090</name>
</gene>
<accession>A7MF59</accession>
<name>SUFS_CROS8</name>
<protein>
    <recommendedName>
        <fullName evidence="1">Cysteine desulfurase</fullName>
        <ecNumber evidence="1">2.8.1.7</ecNumber>
    </recommendedName>
    <alternativeName>
        <fullName evidence="1">Selenocysteine beta-lyase</fullName>
        <shortName evidence="1">SCL</shortName>
    </alternativeName>
    <alternativeName>
        <fullName evidence="1">Selenocysteine lyase</fullName>
        <ecNumber evidence="1">4.4.1.16</ecNumber>
    </alternativeName>
    <alternativeName>
        <fullName evidence="1">Selenocysteine reductase</fullName>
    </alternativeName>
</protein>
<organism>
    <name type="scientific">Cronobacter sakazakii (strain ATCC BAA-894)</name>
    <name type="common">Enterobacter sakazakii</name>
    <dbReference type="NCBI Taxonomy" id="290339"/>
    <lineage>
        <taxon>Bacteria</taxon>
        <taxon>Pseudomonadati</taxon>
        <taxon>Pseudomonadota</taxon>
        <taxon>Gammaproteobacteria</taxon>
        <taxon>Enterobacterales</taxon>
        <taxon>Enterobacteriaceae</taxon>
        <taxon>Cronobacter</taxon>
    </lineage>
</organism>
<keyword id="KW-0963">Cytoplasm</keyword>
<keyword id="KW-0456">Lyase</keyword>
<keyword id="KW-0663">Pyridoxal phosphate</keyword>
<keyword id="KW-1185">Reference proteome</keyword>
<keyword id="KW-0808">Transferase</keyword>
<feature type="chain" id="PRO_1000070426" description="Cysteine desulfurase">
    <location>
        <begin position="1"/>
        <end position="406"/>
    </location>
</feature>
<feature type="active site" description="Cysteine persulfide intermediate" evidence="1">
    <location>
        <position position="364"/>
    </location>
</feature>
<feature type="modified residue" description="N6-(pyridoxal phosphate)lysine" evidence="1">
    <location>
        <position position="226"/>
    </location>
</feature>
<evidence type="ECO:0000255" key="1">
    <source>
        <dbReference type="HAMAP-Rule" id="MF_01831"/>
    </source>
</evidence>
<dbReference type="EC" id="2.8.1.7" evidence="1"/>
<dbReference type="EC" id="4.4.1.16" evidence="1"/>
<dbReference type="EMBL" id="CP000783">
    <property type="protein sequence ID" value="ABU77340.1"/>
    <property type="molecule type" value="Genomic_DNA"/>
</dbReference>
<dbReference type="RefSeq" id="WP_012124978.1">
    <property type="nucleotide sequence ID" value="NC_009778.1"/>
</dbReference>
<dbReference type="SMR" id="A7MF59"/>
<dbReference type="KEGG" id="esa:ESA_02090"/>
<dbReference type="PATRIC" id="fig|290339.8.peg.1866"/>
<dbReference type="HOGENOM" id="CLU_003433_2_5_6"/>
<dbReference type="UniPathway" id="UPA00266"/>
<dbReference type="Proteomes" id="UP000000260">
    <property type="component" value="Chromosome"/>
</dbReference>
<dbReference type="GO" id="GO:0005737">
    <property type="term" value="C:cytoplasm"/>
    <property type="evidence" value="ECO:0007669"/>
    <property type="project" value="UniProtKB-SubCell"/>
</dbReference>
<dbReference type="GO" id="GO:0031071">
    <property type="term" value="F:cysteine desulfurase activity"/>
    <property type="evidence" value="ECO:0007669"/>
    <property type="project" value="UniProtKB-UniRule"/>
</dbReference>
<dbReference type="GO" id="GO:0030170">
    <property type="term" value="F:pyridoxal phosphate binding"/>
    <property type="evidence" value="ECO:0007669"/>
    <property type="project" value="InterPro"/>
</dbReference>
<dbReference type="GO" id="GO:0009000">
    <property type="term" value="F:selenocysteine lyase activity"/>
    <property type="evidence" value="ECO:0007669"/>
    <property type="project" value="UniProtKB-UniRule"/>
</dbReference>
<dbReference type="GO" id="GO:0006534">
    <property type="term" value="P:cysteine metabolic process"/>
    <property type="evidence" value="ECO:0007669"/>
    <property type="project" value="InterPro"/>
</dbReference>
<dbReference type="CDD" id="cd06453">
    <property type="entry name" value="SufS_like"/>
    <property type="match status" value="1"/>
</dbReference>
<dbReference type="FunFam" id="3.40.640.10:FF:000042">
    <property type="entry name" value="Cysteine desulfurase"/>
    <property type="match status" value="1"/>
</dbReference>
<dbReference type="Gene3D" id="3.90.1150.10">
    <property type="entry name" value="Aspartate Aminotransferase, domain 1"/>
    <property type="match status" value="1"/>
</dbReference>
<dbReference type="Gene3D" id="3.40.640.10">
    <property type="entry name" value="Type I PLP-dependent aspartate aminotransferase-like (Major domain)"/>
    <property type="match status" value="1"/>
</dbReference>
<dbReference type="HAMAP" id="MF_01831">
    <property type="entry name" value="SufS_aminotrans_5"/>
    <property type="match status" value="1"/>
</dbReference>
<dbReference type="InterPro" id="IPR000192">
    <property type="entry name" value="Aminotrans_V_dom"/>
</dbReference>
<dbReference type="InterPro" id="IPR020578">
    <property type="entry name" value="Aminotrans_V_PyrdxlP_BS"/>
</dbReference>
<dbReference type="InterPro" id="IPR010970">
    <property type="entry name" value="Cys_dSase_SufS"/>
</dbReference>
<dbReference type="InterPro" id="IPR016454">
    <property type="entry name" value="Cysteine_dSase"/>
</dbReference>
<dbReference type="InterPro" id="IPR015424">
    <property type="entry name" value="PyrdxlP-dep_Trfase"/>
</dbReference>
<dbReference type="InterPro" id="IPR015421">
    <property type="entry name" value="PyrdxlP-dep_Trfase_major"/>
</dbReference>
<dbReference type="InterPro" id="IPR015422">
    <property type="entry name" value="PyrdxlP-dep_Trfase_small"/>
</dbReference>
<dbReference type="NCBIfam" id="NF006791">
    <property type="entry name" value="PRK09295.1"/>
    <property type="match status" value="1"/>
</dbReference>
<dbReference type="NCBIfam" id="TIGR01979">
    <property type="entry name" value="sufS"/>
    <property type="match status" value="1"/>
</dbReference>
<dbReference type="PANTHER" id="PTHR43586">
    <property type="entry name" value="CYSTEINE DESULFURASE"/>
    <property type="match status" value="1"/>
</dbReference>
<dbReference type="PANTHER" id="PTHR43586:SF25">
    <property type="entry name" value="CYSTEINE DESULFURASE"/>
    <property type="match status" value="1"/>
</dbReference>
<dbReference type="Pfam" id="PF00266">
    <property type="entry name" value="Aminotran_5"/>
    <property type="match status" value="1"/>
</dbReference>
<dbReference type="PIRSF" id="PIRSF005572">
    <property type="entry name" value="NifS"/>
    <property type="match status" value="1"/>
</dbReference>
<dbReference type="SUPFAM" id="SSF53383">
    <property type="entry name" value="PLP-dependent transferases"/>
    <property type="match status" value="1"/>
</dbReference>
<dbReference type="PROSITE" id="PS00595">
    <property type="entry name" value="AA_TRANSFER_CLASS_5"/>
    <property type="match status" value="1"/>
</dbReference>
<sequence length="406" mass="44362">MSFSLQQIRSDFPVLTREVNGQPLAYLDSAASAQKPTAVIEAEAEFYRHGYAAVHRGIHTLSADATQRMEAVRTRAAQFINARLPEEIVFVRGTTEGINLVANSWGDSQLHAGDNLIVTAMEHHANIVPWQMLCARTGAELRVLPINQDGTLQLDKLPSLMDERTRLLAVTHVSNVLGTENPIADIIATAHQAGVKVLVDGAQAVMHHKVDVQALDCDFYLFSGHKLYGPTGIGILYAKEEILQAMPPWEGGGAMIATVSLTEGTTWAAAPWRFEAGTPNTGGIIALGAAMDYVDAIGLENIHDYERTLMAYVLRELQAVPDLQIYGPQERLGVIAFNLGKHHAYDVGSFLDNYGIAVRTGHHCAMPLMEFYGVPAMCRASLAMYNTEDEVDRLVAGLIRIHRLLG</sequence>
<proteinExistence type="inferred from homology"/>
<reference key="1">
    <citation type="journal article" date="2010" name="PLoS ONE">
        <title>Genome sequence of Cronobacter sakazakii BAA-894 and comparative genomic hybridization analysis with other Cronobacter species.</title>
        <authorList>
            <person name="Kucerova E."/>
            <person name="Clifton S.W."/>
            <person name="Xia X.Q."/>
            <person name="Long F."/>
            <person name="Porwollik S."/>
            <person name="Fulton L."/>
            <person name="Fronick C."/>
            <person name="Minx P."/>
            <person name="Kyung K."/>
            <person name="Warren W."/>
            <person name="Fulton R."/>
            <person name="Feng D."/>
            <person name="Wollam A."/>
            <person name="Shah N."/>
            <person name="Bhonagiri V."/>
            <person name="Nash W.E."/>
            <person name="Hallsworth-Pepin K."/>
            <person name="Wilson R.K."/>
            <person name="McClelland M."/>
            <person name="Forsythe S.J."/>
        </authorList>
    </citation>
    <scope>NUCLEOTIDE SEQUENCE [LARGE SCALE GENOMIC DNA]</scope>
    <source>
        <strain>ATCC BAA-894</strain>
    </source>
</reference>